<proteinExistence type="inferred from homology"/>
<name>TRPD_THIDA</name>
<evidence type="ECO:0000255" key="1">
    <source>
        <dbReference type="HAMAP-Rule" id="MF_00211"/>
    </source>
</evidence>
<organism>
    <name type="scientific">Thiobacillus denitrificans (strain ATCC 25259 / T1)</name>
    <dbReference type="NCBI Taxonomy" id="292415"/>
    <lineage>
        <taxon>Bacteria</taxon>
        <taxon>Pseudomonadati</taxon>
        <taxon>Pseudomonadota</taxon>
        <taxon>Betaproteobacteria</taxon>
        <taxon>Nitrosomonadales</taxon>
        <taxon>Thiobacillaceae</taxon>
        <taxon>Thiobacillus</taxon>
    </lineage>
</organism>
<comment type="function">
    <text evidence="1">Catalyzes the transfer of the phosphoribosyl group of 5-phosphorylribose-1-pyrophosphate (PRPP) to anthranilate to yield N-(5'-phosphoribosyl)-anthranilate (PRA).</text>
</comment>
<comment type="catalytic activity">
    <reaction evidence="1">
        <text>N-(5-phospho-beta-D-ribosyl)anthranilate + diphosphate = 5-phospho-alpha-D-ribose 1-diphosphate + anthranilate</text>
        <dbReference type="Rhea" id="RHEA:11768"/>
        <dbReference type="ChEBI" id="CHEBI:16567"/>
        <dbReference type="ChEBI" id="CHEBI:18277"/>
        <dbReference type="ChEBI" id="CHEBI:33019"/>
        <dbReference type="ChEBI" id="CHEBI:58017"/>
        <dbReference type="EC" id="2.4.2.18"/>
    </reaction>
</comment>
<comment type="cofactor">
    <cofactor evidence="1">
        <name>Mg(2+)</name>
        <dbReference type="ChEBI" id="CHEBI:18420"/>
    </cofactor>
    <text evidence="1">Binds 2 magnesium ions per monomer.</text>
</comment>
<comment type="pathway">
    <text evidence="1">Amino-acid biosynthesis; L-tryptophan biosynthesis; L-tryptophan from chorismate: step 2/5.</text>
</comment>
<comment type="subunit">
    <text evidence="1">Homodimer.</text>
</comment>
<comment type="similarity">
    <text evidence="1">Belongs to the anthranilate phosphoribosyltransferase family.</text>
</comment>
<reference key="1">
    <citation type="journal article" date="2006" name="J. Bacteriol.">
        <title>The genome sequence of the obligately chemolithoautotrophic, facultatively anaerobic bacterium Thiobacillus denitrificans.</title>
        <authorList>
            <person name="Beller H.R."/>
            <person name="Chain P.S."/>
            <person name="Letain T.E."/>
            <person name="Chakicherla A."/>
            <person name="Larimer F.W."/>
            <person name="Richardson P.M."/>
            <person name="Coleman M.A."/>
            <person name="Wood A.P."/>
            <person name="Kelly D.P."/>
        </authorList>
    </citation>
    <scope>NUCLEOTIDE SEQUENCE [LARGE SCALE GENOMIC DNA]</scope>
    <source>
        <strain>ATCC 25259 / T1</strain>
    </source>
</reference>
<accession>Q3SGS1</accession>
<protein>
    <recommendedName>
        <fullName evidence="1">Anthranilate phosphoribosyltransferase</fullName>
        <ecNumber evidence="1">2.4.2.18</ecNumber>
    </recommendedName>
</protein>
<keyword id="KW-0028">Amino-acid biosynthesis</keyword>
<keyword id="KW-0057">Aromatic amino acid biosynthesis</keyword>
<keyword id="KW-0328">Glycosyltransferase</keyword>
<keyword id="KW-0460">Magnesium</keyword>
<keyword id="KW-0479">Metal-binding</keyword>
<keyword id="KW-1185">Reference proteome</keyword>
<keyword id="KW-0808">Transferase</keyword>
<keyword id="KW-0822">Tryptophan biosynthesis</keyword>
<dbReference type="EC" id="2.4.2.18" evidence="1"/>
<dbReference type="EMBL" id="CP000116">
    <property type="protein sequence ID" value="AAZ98176.1"/>
    <property type="molecule type" value="Genomic_DNA"/>
</dbReference>
<dbReference type="RefSeq" id="WP_011312735.1">
    <property type="nucleotide sequence ID" value="NC_007404.1"/>
</dbReference>
<dbReference type="SMR" id="Q3SGS1"/>
<dbReference type="STRING" id="292415.Tbd_2223"/>
<dbReference type="KEGG" id="tbd:Tbd_2223"/>
<dbReference type="eggNOG" id="COG0547">
    <property type="taxonomic scope" value="Bacteria"/>
</dbReference>
<dbReference type="HOGENOM" id="CLU_034315_2_1_4"/>
<dbReference type="OrthoDB" id="9806430at2"/>
<dbReference type="UniPathway" id="UPA00035">
    <property type="reaction ID" value="UER00041"/>
</dbReference>
<dbReference type="Proteomes" id="UP000008291">
    <property type="component" value="Chromosome"/>
</dbReference>
<dbReference type="GO" id="GO:0005829">
    <property type="term" value="C:cytosol"/>
    <property type="evidence" value="ECO:0007669"/>
    <property type="project" value="TreeGrafter"/>
</dbReference>
<dbReference type="GO" id="GO:0004048">
    <property type="term" value="F:anthranilate phosphoribosyltransferase activity"/>
    <property type="evidence" value="ECO:0007669"/>
    <property type="project" value="UniProtKB-UniRule"/>
</dbReference>
<dbReference type="GO" id="GO:0000287">
    <property type="term" value="F:magnesium ion binding"/>
    <property type="evidence" value="ECO:0007669"/>
    <property type="project" value="UniProtKB-UniRule"/>
</dbReference>
<dbReference type="GO" id="GO:0000162">
    <property type="term" value="P:L-tryptophan biosynthetic process"/>
    <property type="evidence" value="ECO:0007669"/>
    <property type="project" value="UniProtKB-UniRule"/>
</dbReference>
<dbReference type="FunFam" id="1.20.970.10:FF:000006">
    <property type="entry name" value="Anthranilate phosphoribosyltransferase"/>
    <property type="match status" value="1"/>
</dbReference>
<dbReference type="FunFam" id="3.40.1030.10:FF:000002">
    <property type="entry name" value="Anthranilate phosphoribosyltransferase"/>
    <property type="match status" value="1"/>
</dbReference>
<dbReference type="Gene3D" id="3.40.1030.10">
    <property type="entry name" value="Nucleoside phosphorylase/phosphoribosyltransferase catalytic domain"/>
    <property type="match status" value="1"/>
</dbReference>
<dbReference type="Gene3D" id="1.20.970.10">
    <property type="entry name" value="Transferase, Pyrimidine Nucleoside Phosphorylase, Chain C"/>
    <property type="match status" value="1"/>
</dbReference>
<dbReference type="HAMAP" id="MF_00211">
    <property type="entry name" value="TrpD"/>
    <property type="match status" value="1"/>
</dbReference>
<dbReference type="InterPro" id="IPR005940">
    <property type="entry name" value="Anthranilate_Pribosyl_Tfrase"/>
</dbReference>
<dbReference type="InterPro" id="IPR000312">
    <property type="entry name" value="Glycosyl_Trfase_fam3"/>
</dbReference>
<dbReference type="InterPro" id="IPR017459">
    <property type="entry name" value="Glycosyl_Trfase_fam3_N_dom"/>
</dbReference>
<dbReference type="InterPro" id="IPR036320">
    <property type="entry name" value="Glycosyl_Trfase_fam3_N_dom_sf"/>
</dbReference>
<dbReference type="InterPro" id="IPR035902">
    <property type="entry name" value="Nuc_phospho_transferase"/>
</dbReference>
<dbReference type="NCBIfam" id="TIGR01245">
    <property type="entry name" value="trpD"/>
    <property type="match status" value="1"/>
</dbReference>
<dbReference type="PANTHER" id="PTHR43285">
    <property type="entry name" value="ANTHRANILATE PHOSPHORIBOSYLTRANSFERASE"/>
    <property type="match status" value="1"/>
</dbReference>
<dbReference type="PANTHER" id="PTHR43285:SF2">
    <property type="entry name" value="ANTHRANILATE PHOSPHORIBOSYLTRANSFERASE"/>
    <property type="match status" value="1"/>
</dbReference>
<dbReference type="Pfam" id="PF02885">
    <property type="entry name" value="Glycos_trans_3N"/>
    <property type="match status" value="1"/>
</dbReference>
<dbReference type="Pfam" id="PF00591">
    <property type="entry name" value="Glycos_transf_3"/>
    <property type="match status" value="1"/>
</dbReference>
<dbReference type="SUPFAM" id="SSF52418">
    <property type="entry name" value="Nucleoside phosphorylase/phosphoribosyltransferase catalytic domain"/>
    <property type="match status" value="1"/>
</dbReference>
<dbReference type="SUPFAM" id="SSF47648">
    <property type="entry name" value="Nucleoside phosphorylase/phosphoribosyltransferase N-terminal domain"/>
    <property type="match status" value="1"/>
</dbReference>
<gene>
    <name evidence="1" type="primary">trpD</name>
    <name type="ordered locus">Tbd_2223</name>
</gene>
<feature type="chain" id="PRO_0000227197" description="Anthranilate phosphoribosyltransferase">
    <location>
        <begin position="1"/>
        <end position="343"/>
    </location>
</feature>
<feature type="binding site" evidence="1">
    <location>
        <position position="83"/>
    </location>
    <ligand>
        <name>5-phospho-alpha-D-ribose 1-diphosphate</name>
        <dbReference type="ChEBI" id="CHEBI:58017"/>
    </ligand>
</feature>
<feature type="binding site" evidence="1">
    <location>
        <position position="83"/>
    </location>
    <ligand>
        <name>anthranilate</name>
        <dbReference type="ChEBI" id="CHEBI:16567"/>
        <label>1</label>
    </ligand>
</feature>
<feature type="binding site" evidence="1">
    <location>
        <begin position="86"/>
        <end position="87"/>
    </location>
    <ligand>
        <name>5-phospho-alpha-D-ribose 1-diphosphate</name>
        <dbReference type="ChEBI" id="CHEBI:58017"/>
    </ligand>
</feature>
<feature type="binding site" evidence="1">
    <location>
        <position position="91"/>
    </location>
    <ligand>
        <name>5-phospho-alpha-D-ribose 1-diphosphate</name>
        <dbReference type="ChEBI" id="CHEBI:58017"/>
    </ligand>
</feature>
<feature type="binding site" evidence="1">
    <location>
        <begin position="93"/>
        <end position="96"/>
    </location>
    <ligand>
        <name>5-phospho-alpha-D-ribose 1-diphosphate</name>
        <dbReference type="ChEBI" id="CHEBI:58017"/>
    </ligand>
</feature>
<feature type="binding site" evidence="1">
    <location>
        <position position="95"/>
    </location>
    <ligand>
        <name>Mg(2+)</name>
        <dbReference type="ChEBI" id="CHEBI:18420"/>
        <label>1</label>
    </ligand>
</feature>
<feature type="binding site" evidence="1">
    <location>
        <begin position="111"/>
        <end position="119"/>
    </location>
    <ligand>
        <name>5-phospho-alpha-D-ribose 1-diphosphate</name>
        <dbReference type="ChEBI" id="CHEBI:58017"/>
    </ligand>
</feature>
<feature type="binding site" evidence="1">
    <location>
        <position position="123"/>
    </location>
    <ligand>
        <name>5-phospho-alpha-D-ribose 1-diphosphate</name>
        <dbReference type="ChEBI" id="CHEBI:58017"/>
    </ligand>
</feature>
<feature type="binding site" evidence="1">
    <location>
        <position position="169"/>
    </location>
    <ligand>
        <name>anthranilate</name>
        <dbReference type="ChEBI" id="CHEBI:16567"/>
        <label>2</label>
    </ligand>
</feature>
<feature type="binding site" evidence="1">
    <location>
        <position position="228"/>
    </location>
    <ligand>
        <name>Mg(2+)</name>
        <dbReference type="ChEBI" id="CHEBI:18420"/>
        <label>2</label>
    </ligand>
</feature>
<feature type="binding site" evidence="1">
    <location>
        <position position="229"/>
    </location>
    <ligand>
        <name>Mg(2+)</name>
        <dbReference type="ChEBI" id="CHEBI:18420"/>
        <label>1</label>
    </ligand>
</feature>
<feature type="binding site" evidence="1">
    <location>
        <position position="229"/>
    </location>
    <ligand>
        <name>Mg(2+)</name>
        <dbReference type="ChEBI" id="CHEBI:18420"/>
        <label>2</label>
    </ligand>
</feature>
<sequence>MITPQQALTRLVEQREIFHDEMLALMRQIMRGELTPVQIAGVITGLRVKKETVGEIAAAAEVMREFALEVPVQQREHLVDTCGTGGDAAHTFNISTTAAFVAAAAGARVAKHGGRSVSSTSGSADVLEALGVNLALTPEQVAASIDAIGIGFMFAPNFHGAMRHAAPVRRELGVRTLFNILGPLTNPANAPHQLLGVFHADLVGILVRVLQRLGSSHVMVVHGSDGMDEITLAGDTLIGELKDGEVSEYTINPREFGLQPCGSDALKVWDATQAKDMLLSVLDDLPGPARDIVLFNAGAAIYVADRAATLGEGIELAREAIRSGAARDKLQQLVAYSTQAKQA</sequence>